<name>ACCD_IPOPU</name>
<organism>
    <name type="scientific">Ipomoea purpurea</name>
    <name type="common">Common morning glory</name>
    <name type="synonym">Pharbitis purpurea</name>
    <dbReference type="NCBI Taxonomy" id="4121"/>
    <lineage>
        <taxon>Eukaryota</taxon>
        <taxon>Viridiplantae</taxon>
        <taxon>Streptophyta</taxon>
        <taxon>Embryophyta</taxon>
        <taxon>Tracheophyta</taxon>
        <taxon>Spermatophyta</taxon>
        <taxon>Magnoliopsida</taxon>
        <taxon>eudicotyledons</taxon>
        <taxon>Gunneridae</taxon>
        <taxon>Pentapetalae</taxon>
        <taxon>asterids</taxon>
        <taxon>lamiids</taxon>
        <taxon>Solanales</taxon>
        <taxon>Convolvulaceae</taxon>
        <taxon>Ipomoeeae</taxon>
        <taxon>Ipomoea</taxon>
    </lineage>
</organism>
<evidence type="ECO:0000250" key="1"/>
<evidence type="ECO:0000255" key="2">
    <source>
        <dbReference type="HAMAP-Rule" id="MF_01395"/>
    </source>
</evidence>
<evidence type="ECO:0000255" key="3">
    <source>
        <dbReference type="PROSITE-ProRule" id="PRU01136"/>
    </source>
</evidence>
<evidence type="ECO:0000256" key="4">
    <source>
        <dbReference type="SAM" id="MobiDB-lite"/>
    </source>
</evidence>
<proteinExistence type="inferred from homology"/>
<keyword id="KW-0067">ATP-binding</keyword>
<keyword id="KW-0150">Chloroplast</keyword>
<keyword id="KW-0275">Fatty acid biosynthesis</keyword>
<keyword id="KW-0276">Fatty acid metabolism</keyword>
<keyword id="KW-0444">Lipid biosynthesis</keyword>
<keyword id="KW-0443">Lipid metabolism</keyword>
<keyword id="KW-0479">Metal-binding</keyword>
<keyword id="KW-0547">Nucleotide-binding</keyword>
<keyword id="KW-0934">Plastid</keyword>
<keyword id="KW-0808">Transferase</keyword>
<keyword id="KW-0862">Zinc</keyword>
<keyword id="KW-0863">Zinc-finger</keyword>
<sequence>MEKWRIYSFQKEFERRCGLNSSLGPIETTGEDPNRKDTVKNIQSWEDCDNSSCSNVDHLFGVKDNENFISDDTFVVFDIENQIFEIDNDHSFLNEPFSSYSDRNSSYLTNVFTSEDPYYNRYMYDAQYSWNNHINGCIDSYLQSQICIDTTTVSGSDNDSYDIHGSVCDGESHNSSEGESSSRRTHTKGVDLTIRESSNENERESSNENERKSSNDLDRTKKYRDLWLQCENCYGLNYKKFLKSKMNICEQCGYHLKMSSSDRIELLIDPGTWDPMDEYMVSQDPIEFDSEGEQEQEQEQEQEEEETYKDRIDFYQTKTGLTEAVQTGIGQLNGIPVAIGVMDFHFLGGSMGSVVGEKITRLIEHATNNFLPLIIVCASGGARMQEGSLSLMQMAKISSALYEYQLNKRLFYVSILTSPTTGGVTASFGMLGDVIIVEPNAYVAFAGKRVIEQTLNQTVPEGSQEAEYLFEKGLFDLIVPRHLLKSVLSELFEFHALFPLNQNSNQVEC</sequence>
<protein>
    <recommendedName>
        <fullName evidence="2">Acetyl-coenzyme A carboxylase carboxyl transferase subunit beta, chloroplastic</fullName>
        <shortName evidence="2">ACCase subunit beta</shortName>
        <shortName evidence="2">Acetyl-CoA carboxylase carboxyltransferase subunit beta</shortName>
        <ecNumber evidence="2">2.1.3.15</ecNumber>
    </recommendedName>
</protein>
<gene>
    <name evidence="2" type="primary">accD</name>
</gene>
<dbReference type="EC" id="2.1.3.15" evidence="2"/>
<dbReference type="EMBL" id="EU118126">
    <property type="protein sequence ID" value="ABV02357.1"/>
    <property type="molecule type" value="Genomic_DNA"/>
</dbReference>
<dbReference type="RefSeq" id="YP_001468317.1">
    <property type="nucleotide sequence ID" value="NC_009808.1"/>
</dbReference>
<dbReference type="SMR" id="A7Y3E9"/>
<dbReference type="GeneID" id="5601288"/>
<dbReference type="UniPathway" id="UPA00655">
    <property type="reaction ID" value="UER00711"/>
</dbReference>
<dbReference type="GO" id="GO:0009317">
    <property type="term" value="C:acetyl-CoA carboxylase complex"/>
    <property type="evidence" value="ECO:0007669"/>
    <property type="project" value="InterPro"/>
</dbReference>
<dbReference type="GO" id="GO:0009570">
    <property type="term" value="C:chloroplast stroma"/>
    <property type="evidence" value="ECO:0007669"/>
    <property type="project" value="UniProtKB-SubCell"/>
</dbReference>
<dbReference type="GO" id="GO:0003989">
    <property type="term" value="F:acetyl-CoA carboxylase activity"/>
    <property type="evidence" value="ECO:0007669"/>
    <property type="project" value="InterPro"/>
</dbReference>
<dbReference type="GO" id="GO:0005524">
    <property type="term" value="F:ATP binding"/>
    <property type="evidence" value="ECO:0007669"/>
    <property type="project" value="UniProtKB-KW"/>
</dbReference>
<dbReference type="GO" id="GO:0016743">
    <property type="term" value="F:carboxyl- or carbamoyltransferase activity"/>
    <property type="evidence" value="ECO:0007669"/>
    <property type="project" value="UniProtKB-UniRule"/>
</dbReference>
<dbReference type="GO" id="GO:0008270">
    <property type="term" value="F:zinc ion binding"/>
    <property type="evidence" value="ECO:0007669"/>
    <property type="project" value="UniProtKB-UniRule"/>
</dbReference>
<dbReference type="GO" id="GO:0006633">
    <property type="term" value="P:fatty acid biosynthetic process"/>
    <property type="evidence" value="ECO:0007669"/>
    <property type="project" value="UniProtKB-KW"/>
</dbReference>
<dbReference type="GO" id="GO:2001295">
    <property type="term" value="P:malonyl-CoA biosynthetic process"/>
    <property type="evidence" value="ECO:0007669"/>
    <property type="project" value="UniProtKB-UniRule"/>
</dbReference>
<dbReference type="Gene3D" id="3.90.226.10">
    <property type="entry name" value="2-enoyl-CoA Hydratase, Chain A, domain 1"/>
    <property type="match status" value="1"/>
</dbReference>
<dbReference type="HAMAP" id="MF_01395">
    <property type="entry name" value="AcetylCoA_CT_beta"/>
    <property type="match status" value="1"/>
</dbReference>
<dbReference type="InterPro" id="IPR034733">
    <property type="entry name" value="AcCoA_carboxyl_beta"/>
</dbReference>
<dbReference type="InterPro" id="IPR000438">
    <property type="entry name" value="Acetyl_CoA_COase_Trfase_b_su"/>
</dbReference>
<dbReference type="InterPro" id="IPR029045">
    <property type="entry name" value="ClpP/crotonase-like_dom_sf"/>
</dbReference>
<dbReference type="InterPro" id="IPR011762">
    <property type="entry name" value="COA_CT_N"/>
</dbReference>
<dbReference type="NCBIfam" id="TIGR00515">
    <property type="entry name" value="accD"/>
    <property type="match status" value="1"/>
</dbReference>
<dbReference type="PANTHER" id="PTHR42995">
    <property type="entry name" value="ACETYL-COENZYME A CARBOXYLASE CARBOXYL TRANSFERASE SUBUNIT BETA, CHLOROPLASTIC"/>
    <property type="match status" value="1"/>
</dbReference>
<dbReference type="PANTHER" id="PTHR42995:SF5">
    <property type="entry name" value="ACETYL-COENZYME A CARBOXYLASE CARBOXYL TRANSFERASE SUBUNIT BETA, CHLOROPLASTIC"/>
    <property type="match status" value="1"/>
</dbReference>
<dbReference type="Pfam" id="PF01039">
    <property type="entry name" value="Carboxyl_trans"/>
    <property type="match status" value="1"/>
</dbReference>
<dbReference type="PRINTS" id="PR01070">
    <property type="entry name" value="ACCCTRFRASEB"/>
</dbReference>
<dbReference type="SUPFAM" id="SSF52096">
    <property type="entry name" value="ClpP/crotonase"/>
    <property type="match status" value="1"/>
</dbReference>
<dbReference type="PROSITE" id="PS50980">
    <property type="entry name" value="COA_CT_NTER"/>
    <property type="match status" value="1"/>
</dbReference>
<reference key="1">
    <citation type="journal article" date="2007" name="BMC Plant Biol.">
        <title>Complete plastid genome sequences suggest strong selection for retention of photosynthetic genes in the parasitic plant genus Cuscuta.</title>
        <authorList>
            <person name="McNeal J.R."/>
            <person name="Kuehl J.V."/>
            <person name="Boore J.L."/>
            <person name="dePamphilis C.W."/>
        </authorList>
    </citation>
    <scope>NUCLEOTIDE SEQUENCE [LARGE SCALE GENOMIC DNA]</scope>
</reference>
<feature type="chain" id="PRO_0000359145" description="Acetyl-coenzyme A carboxylase carboxyl transferase subunit beta, chloroplastic">
    <location>
        <begin position="1"/>
        <end position="509"/>
    </location>
</feature>
<feature type="domain" description="CoA carboxyltransferase N-terminal" evidence="3">
    <location>
        <begin position="226"/>
        <end position="509"/>
    </location>
</feature>
<feature type="zinc finger region" description="C4-type" evidence="2">
    <location>
        <begin position="230"/>
        <end position="252"/>
    </location>
</feature>
<feature type="region of interest" description="Disordered" evidence="4">
    <location>
        <begin position="164"/>
        <end position="216"/>
    </location>
</feature>
<feature type="region of interest" description="Disordered" evidence="4">
    <location>
        <begin position="288"/>
        <end position="307"/>
    </location>
</feature>
<feature type="compositionally biased region" description="Basic and acidic residues" evidence="4">
    <location>
        <begin position="170"/>
        <end position="182"/>
    </location>
</feature>
<feature type="compositionally biased region" description="Basic and acidic residues" evidence="4">
    <location>
        <begin position="193"/>
        <end position="216"/>
    </location>
</feature>
<feature type="binding site" evidence="2">
    <location>
        <position position="230"/>
    </location>
    <ligand>
        <name>Zn(2+)</name>
        <dbReference type="ChEBI" id="CHEBI:29105"/>
    </ligand>
</feature>
<feature type="binding site" evidence="2">
    <location>
        <position position="233"/>
    </location>
    <ligand>
        <name>Zn(2+)</name>
        <dbReference type="ChEBI" id="CHEBI:29105"/>
    </ligand>
</feature>
<feature type="binding site" evidence="2">
    <location>
        <position position="249"/>
    </location>
    <ligand>
        <name>Zn(2+)</name>
        <dbReference type="ChEBI" id="CHEBI:29105"/>
    </ligand>
</feature>
<feature type="binding site" evidence="2">
    <location>
        <position position="252"/>
    </location>
    <ligand>
        <name>Zn(2+)</name>
        <dbReference type="ChEBI" id="CHEBI:29105"/>
    </ligand>
</feature>
<accession>A7Y3E9</accession>
<geneLocation type="chloroplast"/>
<comment type="function">
    <text evidence="2">Component of the acetyl coenzyme A carboxylase (ACC) complex. Biotin carboxylase (BC) catalyzes the carboxylation of biotin on its carrier protein (BCCP) and then the CO(2) group is transferred by the transcarboxylase to acetyl-CoA to form malonyl-CoA.</text>
</comment>
<comment type="catalytic activity">
    <reaction evidence="2">
        <text>N(6)-carboxybiotinyl-L-lysyl-[protein] + acetyl-CoA = N(6)-biotinyl-L-lysyl-[protein] + malonyl-CoA</text>
        <dbReference type="Rhea" id="RHEA:54728"/>
        <dbReference type="Rhea" id="RHEA-COMP:10505"/>
        <dbReference type="Rhea" id="RHEA-COMP:10506"/>
        <dbReference type="ChEBI" id="CHEBI:57288"/>
        <dbReference type="ChEBI" id="CHEBI:57384"/>
        <dbReference type="ChEBI" id="CHEBI:83144"/>
        <dbReference type="ChEBI" id="CHEBI:83145"/>
        <dbReference type="EC" id="2.1.3.15"/>
    </reaction>
</comment>
<comment type="cofactor">
    <cofactor evidence="2">
        <name>Zn(2+)</name>
        <dbReference type="ChEBI" id="CHEBI:29105"/>
    </cofactor>
    <text evidence="2">Binds 1 zinc ion per subunit.</text>
</comment>
<comment type="pathway">
    <text evidence="2">Lipid metabolism; malonyl-CoA biosynthesis; malonyl-CoA from acetyl-CoA: step 1/1.</text>
</comment>
<comment type="subunit">
    <text evidence="1">Acetyl-CoA carboxylase is a heterohexamer composed of biotin carboxyl carrier protein, biotin carboxylase and 2 subunits each of ACCase subunit alpha and ACCase plastid-coded subunit beta (accD).</text>
</comment>
<comment type="subcellular location">
    <subcellularLocation>
        <location evidence="2">Plastid</location>
        <location evidence="2">Chloroplast stroma</location>
    </subcellularLocation>
</comment>
<comment type="similarity">
    <text evidence="2">Belongs to the AccD/PCCB family.</text>
</comment>